<gene>
    <name evidence="1" type="primary">ctaB</name>
    <name type="ordered locus">OCAR_4687</name>
    <name type="ordered locus">OCA5_c32620</name>
</gene>
<feature type="chain" id="PRO_1000096923" description="Protoheme IX farnesyltransferase">
    <location>
        <begin position="1"/>
        <end position="313"/>
    </location>
</feature>
<feature type="transmembrane region" description="Helical" evidence="1">
    <location>
        <begin position="35"/>
        <end position="55"/>
    </location>
</feature>
<feature type="transmembrane region" description="Helical" evidence="1">
    <location>
        <begin position="56"/>
        <end position="76"/>
    </location>
</feature>
<feature type="transmembrane region" description="Helical" evidence="1">
    <location>
        <begin position="98"/>
        <end position="118"/>
    </location>
</feature>
<feature type="transmembrane region" description="Helical" evidence="1">
    <location>
        <begin position="120"/>
        <end position="140"/>
    </location>
</feature>
<feature type="transmembrane region" description="Helical" evidence="1">
    <location>
        <begin position="153"/>
        <end position="173"/>
    </location>
</feature>
<feature type="transmembrane region" description="Helical" evidence="1">
    <location>
        <begin position="180"/>
        <end position="200"/>
    </location>
</feature>
<feature type="transmembrane region" description="Helical" evidence="1">
    <location>
        <begin position="226"/>
        <end position="246"/>
    </location>
</feature>
<feature type="transmembrane region" description="Helical" evidence="1">
    <location>
        <begin position="248"/>
        <end position="268"/>
    </location>
</feature>
<feature type="transmembrane region" description="Helical" evidence="1">
    <location>
        <begin position="292"/>
        <end position="312"/>
    </location>
</feature>
<sequence>MSVIEQNSVEYPPLIVSEAGVSDYIALLKPRVMSLVVFTALVGLVIAPVHLHPVLAATSILCIAVGGGAAGALNMWYESDIDALMTRTANRPIPRGRVSSPEAAAFGITLAIFSVATLGVLVNWLAGALLAFTIFFYAVVYTMWLKRWTAQNIVIGGAAGALPPVVAWAAATGSLAPQPIILFLIIFLWTPPHFWALALFRSDDYARAKVPMLPVVAGPDATRLQILLYTIVLVTVAILPWPLGYFGAAYGLTSVALGAGMLWFAFNVYRYRTGTQANRAARALFKFSLLYLFLLFAVLPLEVAAHAVAAMIW</sequence>
<name>COXX_AFIC5</name>
<accession>B6JDB7</accession>
<accession>F8BSL0</accession>
<evidence type="ECO:0000255" key="1">
    <source>
        <dbReference type="HAMAP-Rule" id="MF_00154"/>
    </source>
</evidence>
<reference key="1">
    <citation type="journal article" date="2008" name="J. Bacteriol.">
        <title>Genome sequence of the chemolithoautotrophic bacterium Oligotropha carboxidovorans OM5T.</title>
        <authorList>
            <person name="Paul D."/>
            <person name="Bridges S."/>
            <person name="Burgess S.C."/>
            <person name="Dandass Y."/>
            <person name="Lawrence M.L."/>
        </authorList>
    </citation>
    <scope>NUCLEOTIDE SEQUENCE [LARGE SCALE GENOMIC DNA]</scope>
    <source>
        <strain>ATCC 49405 / DSM 1227 / KCTC 32145 / OM5</strain>
    </source>
</reference>
<reference key="2">
    <citation type="journal article" date="2011" name="J. Bacteriol.">
        <title>Complete genome sequences of the chemolithoautotrophic Oligotropha carboxidovorans strains OM4 and OM5.</title>
        <authorList>
            <person name="Volland S."/>
            <person name="Rachinger M."/>
            <person name="Strittmatter A."/>
            <person name="Daniel R."/>
            <person name="Gottschalk G."/>
            <person name="Meyer O."/>
        </authorList>
    </citation>
    <scope>NUCLEOTIDE SEQUENCE [LARGE SCALE GENOMIC DNA]</scope>
    <source>
        <strain>ATCC 49405 / DSM 1227 / KCTC 32145 / OM5</strain>
    </source>
</reference>
<organism>
    <name type="scientific">Afipia carboxidovorans (strain ATCC 49405 / DSM 1227 / KCTC 32145 / OM5)</name>
    <name type="common">Oligotropha carboxidovorans</name>
    <dbReference type="NCBI Taxonomy" id="504832"/>
    <lineage>
        <taxon>Bacteria</taxon>
        <taxon>Pseudomonadati</taxon>
        <taxon>Pseudomonadota</taxon>
        <taxon>Alphaproteobacteria</taxon>
        <taxon>Hyphomicrobiales</taxon>
        <taxon>Nitrobacteraceae</taxon>
        <taxon>Afipia</taxon>
    </lineage>
</organism>
<dbReference type="EC" id="2.5.1.141" evidence="1"/>
<dbReference type="EMBL" id="CP001196">
    <property type="protein sequence ID" value="ACI91829.1"/>
    <property type="molecule type" value="Genomic_DNA"/>
</dbReference>
<dbReference type="EMBL" id="CP002826">
    <property type="protein sequence ID" value="AEI07938.1"/>
    <property type="molecule type" value="Genomic_DNA"/>
</dbReference>
<dbReference type="RefSeq" id="WP_012561860.1">
    <property type="nucleotide sequence ID" value="NC_015684.1"/>
</dbReference>
<dbReference type="SMR" id="B6JDB7"/>
<dbReference type="STRING" id="504832.OCA5_c32620"/>
<dbReference type="KEGG" id="oca:OCAR_4687"/>
<dbReference type="KEGG" id="ocg:OCA5_c32620"/>
<dbReference type="PATRIC" id="fig|504832.7.peg.3430"/>
<dbReference type="eggNOG" id="COG0109">
    <property type="taxonomic scope" value="Bacteria"/>
</dbReference>
<dbReference type="HOGENOM" id="CLU_029631_0_2_5"/>
<dbReference type="OrthoDB" id="9814417at2"/>
<dbReference type="UniPathway" id="UPA00834">
    <property type="reaction ID" value="UER00712"/>
</dbReference>
<dbReference type="Proteomes" id="UP000007730">
    <property type="component" value="Chromosome"/>
</dbReference>
<dbReference type="GO" id="GO:0005886">
    <property type="term" value="C:plasma membrane"/>
    <property type="evidence" value="ECO:0007669"/>
    <property type="project" value="UniProtKB-SubCell"/>
</dbReference>
<dbReference type="GO" id="GO:0008495">
    <property type="term" value="F:protoheme IX farnesyltransferase activity"/>
    <property type="evidence" value="ECO:0007669"/>
    <property type="project" value="UniProtKB-UniRule"/>
</dbReference>
<dbReference type="GO" id="GO:0048034">
    <property type="term" value="P:heme O biosynthetic process"/>
    <property type="evidence" value="ECO:0007669"/>
    <property type="project" value="UniProtKB-UniRule"/>
</dbReference>
<dbReference type="CDD" id="cd13957">
    <property type="entry name" value="PT_UbiA_Cox10"/>
    <property type="match status" value="1"/>
</dbReference>
<dbReference type="Gene3D" id="1.10.357.140">
    <property type="entry name" value="UbiA prenyltransferase"/>
    <property type="match status" value="1"/>
</dbReference>
<dbReference type="HAMAP" id="MF_00154">
    <property type="entry name" value="CyoE_CtaB"/>
    <property type="match status" value="1"/>
</dbReference>
<dbReference type="InterPro" id="IPR006369">
    <property type="entry name" value="Protohaem_IX_farnesylTrfase"/>
</dbReference>
<dbReference type="InterPro" id="IPR000537">
    <property type="entry name" value="UbiA_prenyltransferase"/>
</dbReference>
<dbReference type="InterPro" id="IPR030470">
    <property type="entry name" value="UbiA_prenylTrfase_CS"/>
</dbReference>
<dbReference type="InterPro" id="IPR044878">
    <property type="entry name" value="UbiA_sf"/>
</dbReference>
<dbReference type="NCBIfam" id="TIGR01473">
    <property type="entry name" value="cyoE_ctaB"/>
    <property type="match status" value="1"/>
</dbReference>
<dbReference type="NCBIfam" id="NF003349">
    <property type="entry name" value="PRK04375.1-2"/>
    <property type="match status" value="1"/>
</dbReference>
<dbReference type="PANTHER" id="PTHR43448:SF7">
    <property type="entry name" value="4-HYDROXYBENZOATE SOLANESYLTRANSFERASE"/>
    <property type="match status" value="1"/>
</dbReference>
<dbReference type="PANTHER" id="PTHR43448">
    <property type="entry name" value="PROTOHEME IX FARNESYLTRANSFERASE, MITOCHONDRIAL"/>
    <property type="match status" value="1"/>
</dbReference>
<dbReference type="Pfam" id="PF01040">
    <property type="entry name" value="UbiA"/>
    <property type="match status" value="1"/>
</dbReference>
<dbReference type="PROSITE" id="PS00943">
    <property type="entry name" value="UBIA"/>
    <property type="match status" value="1"/>
</dbReference>
<keyword id="KW-0997">Cell inner membrane</keyword>
<keyword id="KW-1003">Cell membrane</keyword>
<keyword id="KW-0350">Heme biosynthesis</keyword>
<keyword id="KW-0472">Membrane</keyword>
<keyword id="KW-1185">Reference proteome</keyword>
<keyword id="KW-0808">Transferase</keyword>
<keyword id="KW-0812">Transmembrane</keyword>
<keyword id="KW-1133">Transmembrane helix</keyword>
<protein>
    <recommendedName>
        <fullName evidence="1">Protoheme IX farnesyltransferase</fullName>
        <ecNumber evidence="1">2.5.1.141</ecNumber>
    </recommendedName>
    <alternativeName>
        <fullName evidence="1">Heme B farnesyltransferase</fullName>
    </alternativeName>
    <alternativeName>
        <fullName evidence="1">Heme O synthase</fullName>
    </alternativeName>
</protein>
<proteinExistence type="inferred from homology"/>
<comment type="function">
    <text evidence="1">Converts heme B (protoheme IX) to heme O by substitution of the vinyl group on carbon 2 of heme B porphyrin ring with a hydroxyethyl farnesyl side group.</text>
</comment>
<comment type="catalytic activity">
    <reaction evidence="1">
        <text>heme b + (2E,6E)-farnesyl diphosphate + H2O = Fe(II)-heme o + diphosphate</text>
        <dbReference type="Rhea" id="RHEA:28070"/>
        <dbReference type="ChEBI" id="CHEBI:15377"/>
        <dbReference type="ChEBI" id="CHEBI:33019"/>
        <dbReference type="ChEBI" id="CHEBI:60344"/>
        <dbReference type="ChEBI" id="CHEBI:60530"/>
        <dbReference type="ChEBI" id="CHEBI:175763"/>
        <dbReference type="EC" id="2.5.1.141"/>
    </reaction>
</comment>
<comment type="pathway">
    <text evidence="1">Porphyrin-containing compound metabolism; heme O biosynthesis; heme O from protoheme: step 1/1.</text>
</comment>
<comment type="subcellular location">
    <subcellularLocation>
        <location evidence="1">Cell inner membrane</location>
        <topology evidence="1">Multi-pass membrane protein</topology>
    </subcellularLocation>
</comment>
<comment type="miscellaneous">
    <text evidence="1">Carbon 2 of the heme B porphyrin ring is defined according to the Fischer nomenclature.</text>
</comment>
<comment type="similarity">
    <text evidence="1">Belongs to the UbiA prenyltransferase family. Protoheme IX farnesyltransferase subfamily.</text>
</comment>